<evidence type="ECO:0000250" key="1"/>
<evidence type="ECO:0000255" key="2"/>
<evidence type="ECO:0000305" key="3"/>
<protein>
    <recommendedName>
        <fullName>CDGSH iron-sulfur domain-containing protein 2B</fullName>
    </recommendedName>
</protein>
<keyword id="KW-0001">2Fe-2S</keyword>
<keyword id="KW-0072">Autophagy</keyword>
<keyword id="KW-0256">Endoplasmic reticulum</keyword>
<keyword id="KW-0408">Iron</keyword>
<keyword id="KW-0411">Iron-sulfur</keyword>
<keyword id="KW-0472">Membrane</keyword>
<keyword id="KW-0479">Metal-binding</keyword>
<keyword id="KW-0496">Mitochondrion</keyword>
<keyword id="KW-1000">Mitochondrion outer membrane</keyword>
<keyword id="KW-0812">Transmembrane</keyword>
<keyword id="KW-1133">Transmembrane helix</keyword>
<dbReference type="EMBL" id="BT073689">
    <property type="protein sequence ID" value="ACO08113.1"/>
    <property type="molecule type" value="mRNA"/>
</dbReference>
<dbReference type="SMR" id="C1BGG0"/>
<dbReference type="Proteomes" id="UP000694395">
    <property type="component" value="Unplaced"/>
</dbReference>
<dbReference type="GO" id="GO:0005789">
    <property type="term" value="C:endoplasmic reticulum membrane"/>
    <property type="evidence" value="ECO:0000250"/>
    <property type="project" value="UniProtKB"/>
</dbReference>
<dbReference type="GO" id="GO:0005741">
    <property type="term" value="C:mitochondrial outer membrane"/>
    <property type="evidence" value="ECO:0000250"/>
    <property type="project" value="UniProtKB"/>
</dbReference>
<dbReference type="GO" id="GO:0051537">
    <property type="term" value="F:2 iron, 2 sulfur cluster binding"/>
    <property type="evidence" value="ECO:0000250"/>
    <property type="project" value="UniProtKB"/>
</dbReference>
<dbReference type="GO" id="GO:0046872">
    <property type="term" value="F:metal ion binding"/>
    <property type="evidence" value="ECO:0007669"/>
    <property type="project" value="UniProtKB-KW"/>
</dbReference>
<dbReference type="GO" id="GO:0042803">
    <property type="term" value="F:protein homodimerization activity"/>
    <property type="evidence" value="ECO:0000250"/>
    <property type="project" value="UniProtKB"/>
</dbReference>
<dbReference type="GO" id="GO:0000422">
    <property type="term" value="P:autophagy of mitochondrion"/>
    <property type="evidence" value="ECO:0000250"/>
    <property type="project" value="UniProtKB"/>
</dbReference>
<dbReference type="GO" id="GO:0010506">
    <property type="term" value="P:regulation of autophagy"/>
    <property type="evidence" value="ECO:0000250"/>
    <property type="project" value="UniProtKB"/>
</dbReference>
<dbReference type="FunFam" id="3.40.5.90:FF:000001">
    <property type="entry name" value="CDGSH iron-sulfur domain-containing protein 1"/>
    <property type="match status" value="1"/>
</dbReference>
<dbReference type="Gene3D" id="3.40.5.90">
    <property type="entry name" value="CDGSH iron-sulfur domain, mitoNEET-type"/>
    <property type="match status" value="1"/>
</dbReference>
<dbReference type="InterPro" id="IPR045131">
    <property type="entry name" value="CISD1/2"/>
</dbReference>
<dbReference type="InterPro" id="IPR018967">
    <property type="entry name" value="FeS-contain_CDGSH-typ"/>
</dbReference>
<dbReference type="InterPro" id="IPR019610">
    <property type="entry name" value="FeS-contain_mitoNEET_N"/>
</dbReference>
<dbReference type="InterPro" id="IPR042216">
    <property type="entry name" value="MitoNEET_CISD"/>
</dbReference>
<dbReference type="PANTHER" id="PTHR13680">
    <property type="entry name" value="CDGSH IRON-SULFUR DOMAIN-CONTAINING PROTEIN 1"/>
    <property type="match status" value="1"/>
</dbReference>
<dbReference type="PANTHER" id="PTHR13680:SF33">
    <property type="entry name" value="CDGSH IRON-SULFUR DOMAIN-CONTAINING PROTEIN 2"/>
    <property type="match status" value="1"/>
</dbReference>
<dbReference type="Pfam" id="PF10660">
    <property type="entry name" value="MitoNEET_N"/>
    <property type="match status" value="1"/>
</dbReference>
<dbReference type="Pfam" id="PF09360">
    <property type="entry name" value="zf-CDGSH"/>
    <property type="match status" value="1"/>
</dbReference>
<dbReference type="SMART" id="SM00704">
    <property type="entry name" value="ZnF_CDGSH"/>
    <property type="match status" value="1"/>
</dbReference>
<accession>C1BGG0</accession>
<sequence length="135" mass="15509">MVLETISKIIKTQLPAYLKKFPLPETIGGFARLTVLDWLRLLPLLGILTLLGYLTIRPFLPKKKKQKDSLINLKIQKENPKVVNEIDIEDLKSTNVCYCRCWRSKTFPVCDKSHIKHNELTGDNVGPLILKKKII</sequence>
<gene>
    <name type="primary">cisd2b</name>
</gene>
<feature type="chain" id="PRO_0000392017" description="CDGSH iron-sulfur domain-containing protein 2B">
    <location>
        <begin position="1"/>
        <end position="135"/>
    </location>
</feature>
<feature type="topological domain" description="Lumenal" evidence="2">
    <location>
        <begin position="1"/>
        <end position="37"/>
    </location>
</feature>
<feature type="transmembrane region" description="Helical" evidence="2">
    <location>
        <begin position="38"/>
        <end position="60"/>
    </location>
</feature>
<feature type="topological domain" description="Cytoplasmic" evidence="2">
    <location>
        <begin position="61"/>
        <end position="135"/>
    </location>
</feature>
<feature type="binding site" evidence="1">
    <location>
        <position position="99"/>
    </location>
    <ligand>
        <name>[2Fe-2S] cluster</name>
        <dbReference type="ChEBI" id="CHEBI:190135"/>
    </ligand>
</feature>
<feature type="binding site" evidence="1">
    <location>
        <position position="101"/>
    </location>
    <ligand>
        <name>[2Fe-2S] cluster</name>
        <dbReference type="ChEBI" id="CHEBI:190135"/>
    </ligand>
</feature>
<feature type="binding site" evidence="1">
    <location>
        <position position="110"/>
    </location>
    <ligand>
        <name>[2Fe-2S] cluster</name>
        <dbReference type="ChEBI" id="CHEBI:190135"/>
    </ligand>
</feature>
<feature type="binding site" evidence="1">
    <location>
        <position position="114"/>
    </location>
    <ligand>
        <name>[2Fe-2S] cluster</name>
        <dbReference type="ChEBI" id="CHEBI:190135"/>
    </ligand>
</feature>
<reference key="1">
    <citation type="submission" date="2009-03" db="EMBL/GenBank/DDBJ databases">
        <title>Oncorhynchus mykiss ESTs and full-length cDNAs from White Blood Cells.</title>
        <authorList>
            <person name="Yasuike M."/>
            <person name="von Schalburg K."/>
            <person name="Cooper G."/>
            <person name="Leong J."/>
            <person name="Davidson W.S."/>
            <person name="Koop B.F."/>
        </authorList>
    </citation>
    <scope>NUCLEOTIDE SEQUENCE [LARGE SCALE MRNA]</scope>
    <source>
        <tissue>Leukocyte</tissue>
    </source>
</reference>
<name>CID2B_ONCMY</name>
<proteinExistence type="evidence at transcript level"/>
<organism>
    <name type="scientific">Oncorhynchus mykiss</name>
    <name type="common">Rainbow trout</name>
    <name type="synonym">Salmo gairdneri</name>
    <dbReference type="NCBI Taxonomy" id="8022"/>
    <lineage>
        <taxon>Eukaryota</taxon>
        <taxon>Metazoa</taxon>
        <taxon>Chordata</taxon>
        <taxon>Craniata</taxon>
        <taxon>Vertebrata</taxon>
        <taxon>Euteleostomi</taxon>
        <taxon>Actinopterygii</taxon>
        <taxon>Neopterygii</taxon>
        <taxon>Teleostei</taxon>
        <taxon>Protacanthopterygii</taxon>
        <taxon>Salmoniformes</taxon>
        <taxon>Salmonidae</taxon>
        <taxon>Salmoninae</taxon>
        <taxon>Oncorhynchus</taxon>
    </lineage>
</organism>
<comment type="function">
    <text evidence="1">Regulator of autophagy that contributes to antagonize becn1-mediated cellular autophagy at the endoplasmic reticulum. Participates in the interaction of bcl2 with becn1 and is required for bcl2-mediated depression of endoplasmic reticulum Ca(2+) stores during autophagy (By similarity).</text>
</comment>
<comment type="cofactor">
    <cofactor evidence="1">
        <name>[2Fe-2S] cluster</name>
        <dbReference type="ChEBI" id="CHEBI:190135"/>
    </cofactor>
    <text evidence="1">Binds 1 [2Fe-2S] cluster.</text>
</comment>
<comment type="subunit">
    <text evidence="1">Homodimer.</text>
</comment>
<comment type="subcellular location">
    <subcellularLocation>
        <location evidence="1">Endoplasmic reticulum membrane</location>
        <topology evidence="1">Single-pass membrane protein</topology>
    </subcellularLocation>
    <subcellularLocation>
        <location evidence="1">Mitochondrion outer membrane</location>
        <topology evidence="1">Single-pass membrane protein</topology>
    </subcellularLocation>
</comment>
<comment type="similarity">
    <text evidence="3">Belongs to the CISD protein family. CISD2 subfamily.</text>
</comment>